<feature type="chain" id="PRO_1000050669" description="Large ribosomal subunit protein bL35">
    <location>
        <begin position="1"/>
        <end position="65"/>
    </location>
</feature>
<gene>
    <name evidence="1" type="primary">rpmI</name>
    <name type="ordered locus">BURPS668_1714</name>
</gene>
<name>RL35_BURP6</name>
<evidence type="ECO:0000255" key="1">
    <source>
        <dbReference type="HAMAP-Rule" id="MF_00514"/>
    </source>
</evidence>
<evidence type="ECO:0000305" key="2"/>
<proteinExistence type="inferred from homology"/>
<reference key="1">
    <citation type="journal article" date="2010" name="Genome Biol. Evol.">
        <title>Continuing evolution of Burkholderia mallei through genome reduction and large-scale rearrangements.</title>
        <authorList>
            <person name="Losada L."/>
            <person name="Ronning C.M."/>
            <person name="DeShazer D."/>
            <person name="Woods D."/>
            <person name="Fedorova N."/>
            <person name="Kim H.S."/>
            <person name="Shabalina S.A."/>
            <person name="Pearson T.R."/>
            <person name="Brinkac L."/>
            <person name="Tan P."/>
            <person name="Nandi T."/>
            <person name="Crabtree J."/>
            <person name="Badger J."/>
            <person name="Beckstrom-Sternberg S."/>
            <person name="Saqib M."/>
            <person name="Schutzer S.E."/>
            <person name="Keim P."/>
            <person name="Nierman W.C."/>
        </authorList>
    </citation>
    <scope>NUCLEOTIDE SEQUENCE [LARGE SCALE GENOMIC DNA]</scope>
    <source>
        <strain>668</strain>
    </source>
</reference>
<accession>A3N8T3</accession>
<protein>
    <recommendedName>
        <fullName evidence="1">Large ribosomal subunit protein bL35</fullName>
    </recommendedName>
    <alternativeName>
        <fullName evidence="2">50S ribosomal protein L35</fullName>
    </alternativeName>
</protein>
<keyword id="KW-0687">Ribonucleoprotein</keyword>
<keyword id="KW-0689">Ribosomal protein</keyword>
<organism>
    <name type="scientific">Burkholderia pseudomallei (strain 668)</name>
    <dbReference type="NCBI Taxonomy" id="320373"/>
    <lineage>
        <taxon>Bacteria</taxon>
        <taxon>Pseudomonadati</taxon>
        <taxon>Pseudomonadota</taxon>
        <taxon>Betaproteobacteria</taxon>
        <taxon>Burkholderiales</taxon>
        <taxon>Burkholderiaceae</taxon>
        <taxon>Burkholderia</taxon>
        <taxon>pseudomallei group</taxon>
    </lineage>
</organism>
<dbReference type="EMBL" id="CP000570">
    <property type="protein sequence ID" value="ABN85093.1"/>
    <property type="molecule type" value="Genomic_DNA"/>
</dbReference>
<dbReference type="RefSeq" id="WP_004191477.1">
    <property type="nucleotide sequence ID" value="NC_009074.1"/>
</dbReference>
<dbReference type="SMR" id="A3N8T3"/>
<dbReference type="GeneID" id="98102115"/>
<dbReference type="KEGG" id="bpd:BURPS668_1714"/>
<dbReference type="HOGENOM" id="CLU_169643_1_0_4"/>
<dbReference type="GO" id="GO:0022625">
    <property type="term" value="C:cytosolic large ribosomal subunit"/>
    <property type="evidence" value="ECO:0007669"/>
    <property type="project" value="TreeGrafter"/>
</dbReference>
<dbReference type="GO" id="GO:0003735">
    <property type="term" value="F:structural constituent of ribosome"/>
    <property type="evidence" value="ECO:0007669"/>
    <property type="project" value="InterPro"/>
</dbReference>
<dbReference type="GO" id="GO:0006412">
    <property type="term" value="P:translation"/>
    <property type="evidence" value="ECO:0007669"/>
    <property type="project" value="UniProtKB-UniRule"/>
</dbReference>
<dbReference type="FunFam" id="4.10.410.60:FF:000001">
    <property type="entry name" value="50S ribosomal protein L35"/>
    <property type="match status" value="1"/>
</dbReference>
<dbReference type="Gene3D" id="4.10.410.60">
    <property type="match status" value="1"/>
</dbReference>
<dbReference type="HAMAP" id="MF_00514">
    <property type="entry name" value="Ribosomal_bL35"/>
    <property type="match status" value="1"/>
</dbReference>
<dbReference type="InterPro" id="IPR001706">
    <property type="entry name" value="Ribosomal_bL35"/>
</dbReference>
<dbReference type="InterPro" id="IPR021137">
    <property type="entry name" value="Ribosomal_bL35-like"/>
</dbReference>
<dbReference type="InterPro" id="IPR018265">
    <property type="entry name" value="Ribosomal_bL35_CS"/>
</dbReference>
<dbReference type="InterPro" id="IPR037229">
    <property type="entry name" value="Ribosomal_bL35_sf"/>
</dbReference>
<dbReference type="NCBIfam" id="TIGR00001">
    <property type="entry name" value="rpmI_bact"/>
    <property type="match status" value="1"/>
</dbReference>
<dbReference type="PANTHER" id="PTHR33343">
    <property type="entry name" value="54S RIBOSOMAL PROTEIN BL35M"/>
    <property type="match status" value="1"/>
</dbReference>
<dbReference type="PANTHER" id="PTHR33343:SF1">
    <property type="entry name" value="LARGE RIBOSOMAL SUBUNIT PROTEIN BL35M"/>
    <property type="match status" value="1"/>
</dbReference>
<dbReference type="Pfam" id="PF01632">
    <property type="entry name" value="Ribosomal_L35p"/>
    <property type="match status" value="1"/>
</dbReference>
<dbReference type="PRINTS" id="PR00064">
    <property type="entry name" value="RIBOSOMALL35"/>
</dbReference>
<dbReference type="SUPFAM" id="SSF143034">
    <property type="entry name" value="L35p-like"/>
    <property type="match status" value="1"/>
</dbReference>
<dbReference type="PROSITE" id="PS00936">
    <property type="entry name" value="RIBOSOMAL_L35"/>
    <property type="match status" value="1"/>
</dbReference>
<sequence>MPKMKTKKSAAKRFVVRPGGTVKRGQAFKRHILTKKTTKNKRHLRGATAVHDSDLNSVRAMLPFA</sequence>
<comment type="similarity">
    <text evidence="1">Belongs to the bacterial ribosomal protein bL35 family.</text>
</comment>